<dbReference type="EC" id="3.1.2.22" evidence="2 5"/>
<dbReference type="EMBL" id="AK152807">
    <property type="protein sequence ID" value="BAE31512.1"/>
    <property type="molecule type" value="mRNA"/>
</dbReference>
<dbReference type="EMBL" id="AC133649">
    <property type="status" value="NOT_ANNOTATED_CDS"/>
    <property type="molecule type" value="Genomic_DNA"/>
</dbReference>
<dbReference type="EMBL" id="BC032261">
    <property type="protein sequence ID" value="AAH32261.1"/>
    <property type="molecule type" value="mRNA"/>
</dbReference>
<dbReference type="EMBL" id="BC091733">
    <property type="protein sequence ID" value="AAH91733.1"/>
    <property type="molecule type" value="mRNA"/>
</dbReference>
<dbReference type="EMBL" id="BN000127">
    <property type="protein sequence ID" value="CAD67578.1"/>
    <property type="molecule type" value="mRNA"/>
</dbReference>
<dbReference type="CCDS" id="CCDS29700.1"/>
<dbReference type="RefSeq" id="NP_666208.2">
    <property type="nucleotide sequence ID" value="NM_146096.3"/>
</dbReference>
<dbReference type="RefSeq" id="XP_011245530.1">
    <property type="nucleotide sequence ID" value="XM_011247228.4"/>
</dbReference>
<dbReference type="SMR" id="Q7M759"/>
<dbReference type="FunCoup" id="Q7M759">
    <property type="interactions" value="1239"/>
</dbReference>
<dbReference type="STRING" id="10090.ENSMUSP00000056099"/>
<dbReference type="ESTHER" id="mouse-q7m759">
    <property type="family name" value="ABHD17-depalmitoylase"/>
</dbReference>
<dbReference type="MEROPS" id="S09.055"/>
<dbReference type="GlyGen" id="Q7M759">
    <property type="glycosylation" value="1 site, 1 N-linked glycan (1 site)"/>
</dbReference>
<dbReference type="iPTMnet" id="Q7M759"/>
<dbReference type="PhosphoSitePlus" id="Q7M759"/>
<dbReference type="SwissPalm" id="Q7M759"/>
<dbReference type="PaxDb" id="10090-ENSMUSP00000056099"/>
<dbReference type="PeptideAtlas" id="Q7M759"/>
<dbReference type="ProteomicsDB" id="285896"/>
<dbReference type="Pumba" id="Q7M759"/>
<dbReference type="Antibodypedia" id="26944">
    <property type="antibodies" value="33 antibodies from 14 providers"/>
</dbReference>
<dbReference type="DNASU" id="226016"/>
<dbReference type="Ensembl" id="ENSMUST00000052556.5">
    <property type="protein sequence ID" value="ENSMUSP00000056099.4"/>
    <property type="gene ID" value="ENSMUSG00000047368.5"/>
</dbReference>
<dbReference type="GeneID" id="226016"/>
<dbReference type="KEGG" id="mmu:226016"/>
<dbReference type="UCSC" id="uc008gzb.1">
    <property type="organism name" value="mouse"/>
</dbReference>
<dbReference type="AGR" id="MGI:1917816"/>
<dbReference type="CTD" id="51104"/>
<dbReference type="MGI" id="MGI:1917816">
    <property type="gene designation" value="Abhd17b"/>
</dbReference>
<dbReference type="VEuPathDB" id="HostDB:ENSMUSG00000047368"/>
<dbReference type="eggNOG" id="KOG1552">
    <property type="taxonomic scope" value="Eukaryota"/>
</dbReference>
<dbReference type="GeneTree" id="ENSGT00940000157611"/>
<dbReference type="HOGENOM" id="CLU_029375_5_4_1"/>
<dbReference type="InParanoid" id="Q7M759"/>
<dbReference type="OMA" id="GENIYML"/>
<dbReference type="OrthoDB" id="446723at2759"/>
<dbReference type="PhylomeDB" id="Q7M759"/>
<dbReference type="TreeFam" id="TF314365"/>
<dbReference type="Reactome" id="R-MMU-9648002">
    <property type="pathway name" value="RAS processing"/>
</dbReference>
<dbReference type="BioGRID-ORCS" id="226016">
    <property type="hits" value="2 hits in 76 CRISPR screens"/>
</dbReference>
<dbReference type="ChiTaRS" id="Abhd17b">
    <property type="organism name" value="mouse"/>
</dbReference>
<dbReference type="PRO" id="PR:Q7M759"/>
<dbReference type="Proteomes" id="UP000000589">
    <property type="component" value="Chromosome 19"/>
</dbReference>
<dbReference type="RNAct" id="Q7M759">
    <property type="molecule type" value="protein"/>
</dbReference>
<dbReference type="Bgee" id="ENSMUSG00000047368">
    <property type="expression patterns" value="Expressed in dorsal pancreas and 228 other cell types or tissues"/>
</dbReference>
<dbReference type="ExpressionAtlas" id="Q7M759">
    <property type="expression patterns" value="baseline and differential"/>
</dbReference>
<dbReference type="GO" id="GO:0043197">
    <property type="term" value="C:dendritic spine"/>
    <property type="evidence" value="ECO:0007669"/>
    <property type="project" value="UniProtKB-SubCell"/>
</dbReference>
<dbReference type="GO" id="GO:0098978">
    <property type="term" value="C:glutamatergic synapse"/>
    <property type="evidence" value="ECO:0007669"/>
    <property type="project" value="Ensembl"/>
</dbReference>
<dbReference type="GO" id="GO:0005886">
    <property type="term" value="C:plasma membrane"/>
    <property type="evidence" value="ECO:0000314"/>
    <property type="project" value="UniProtKB"/>
</dbReference>
<dbReference type="GO" id="GO:0014069">
    <property type="term" value="C:postsynaptic density"/>
    <property type="evidence" value="ECO:0000314"/>
    <property type="project" value="UniProtKB"/>
</dbReference>
<dbReference type="GO" id="GO:0098839">
    <property type="term" value="C:postsynaptic density membrane"/>
    <property type="evidence" value="ECO:0007669"/>
    <property type="project" value="UniProtKB-SubCell"/>
</dbReference>
<dbReference type="GO" id="GO:0098944">
    <property type="term" value="C:postsynaptic recycling endosome membrane"/>
    <property type="evidence" value="ECO:0007669"/>
    <property type="project" value="Ensembl"/>
</dbReference>
<dbReference type="GO" id="GO:0055038">
    <property type="term" value="C:recycling endosome membrane"/>
    <property type="evidence" value="ECO:0000314"/>
    <property type="project" value="UniProtKB"/>
</dbReference>
<dbReference type="GO" id="GO:0008474">
    <property type="term" value="F:palmitoyl-(protein) hydrolase activity"/>
    <property type="evidence" value="ECO:0000315"/>
    <property type="project" value="UniProtKB"/>
</dbReference>
<dbReference type="GO" id="GO:1902817">
    <property type="term" value="P:negative regulation of protein localization to microtubule"/>
    <property type="evidence" value="ECO:0000315"/>
    <property type="project" value="UniProtKB"/>
</dbReference>
<dbReference type="GO" id="GO:1905668">
    <property type="term" value="P:positive regulation of protein localization to endosome"/>
    <property type="evidence" value="ECO:0000315"/>
    <property type="project" value="UniProtKB"/>
</dbReference>
<dbReference type="GO" id="GO:0002084">
    <property type="term" value="P:protein depalmitoylation"/>
    <property type="evidence" value="ECO:0000315"/>
    <property type="project" value="UniProtKB"/>
</dbReference>
<dbReference type="GO" id="GO:1902950">
    <property type="term" value="P:regulation of dendritic spine maintenance"/>
    <property type="evidence" value="ECO:0000315"/>
    <property type="project" value="UniProtKB"/>
</dbReference>
<dbReference type="GO" id="GO:1902473">
    <property type="term" value="P:regulation of protein localization to synapse"/>
    <property type="evidence" value="ECO:0000315"/>
    <property type="project" value="UniProtKB"/>
</dbReference>
<dbReference type="FunFam" id="3.40.50.1820:FF:000008">
    <property type="entry name" value="Alpha/beta hydrolase domain-containing protein 17B"/>
    <property type="match status" value="1"/>
</dbReference>
<dbReference type="Gene3D" id="3.40.50.1820">
    <property type="entry name" value="alpha/beta hydrolase"/>
    <property type="match status" value="1"/>
</dbReference>
<dbReference type="InterPro" id="IPR029058">
    <property type="entry name" value="AB_hydrolase_fold"/>
</dbReference>
<dbReference type="InterPro" id="IPR022742">
    <property type="entry name" value="Hydrolase_4"/>
</dbReference>
<dbReference type="PANTHER" id="PTHR12277">
    <property type="entry name" value="ALPHA/BETA HYDROLASE DOMAIN-CONTAINING PROTEIN"/>
    <property type="match status" value="1"/>
</dbReference>
<dbReference type="PANTHER" id="PTHR12277:SF48">
    <property type="entry name" value="ALPHA_BETA HYDROLASE DOMAIN-CONTAINING PROTEIN 17B"/>
    <property type="match status" value="1"/>
</dbReference>
<dbReference type="Pfam" id="PF12146">
    <property type="entry name" value="Hydrolase_4"/>
    <property type="match status" value="1"/>
</dbReference>
<dbReference type="SUPFAM" id="SSF53474">
    <property type="entry name" value="alpha/beta-Hydrolases"/>
    <property type="match status" value="1"/>
</dbReference>
<gene>
    <name evidence="6" type="primary">Abhd17b</name>
</gene>
<protein>
    <recommendedName>
        <fullName evidence="3">Alpha/beta hydrolase domain-containing protein 17B</fullName>
        <shortName evidence="6">Abhydrolase domain-containing protein 17B</shortName>
        <ecNumber evidence="2 5">3.1.2.22</ecNumber>
    </recommendedName>
</protein>
<proteinExistence type="evidence at protein level"/>
<reference key="1">
    <citation type="journal article" date="2005" name="Science">
        <title>The transcriptional landscape of the mammalian genome.</title>
        <authorList>
            <person name="Carninci P."/>
            <person name="Kasukawa T."/>
            <person name="Katayama S."/>
            <person name="Gough J."/>
            <person name="Frith M.C."/>
            <person name="Maeda N."/>
            <person name="Oyama R."/>
            <person name="Ravasi T."/>
            <person name="Lenhard B."/>
            <person name="Wells C."/>
            <person name="Kodzius R."/>
            <person name="Shimokawa K."/>
            <person name="Bajic V.B."/>
            <person name="Brenner S.E."/>
            <person name="Batalov S."/>
            <person name="Forrest A.R."/>
            <person name="Zavolan M."/>
            <person name="Davis M.J."/>
            <person name="Wilming L.G."/>
            <person name="Aidinis V."/>
            <person name="Allen J.E."/>
            <person name="Ambesi-Impiombato A."/>
            <person name="Apweiler R."/>
            <person name="Aturaliya R.N."/>
            <person name="Bailey T.L."/>
            <person name="Bansal M."/>
            <person name="Baxter L."/>
            <person name="Beisel K.W."/>
            <person name="Bersano T."/>
            <person name="Bono H."/>
            <person name="Chalk A.M."/>
            <person name="Chiu K.P."/>
            <person name="Choudhary V."/>
            <person name="Christoffels A."/>
            <person name="Clutterbuck D.R."/>
            <person name="Crowe M.L."/>
            <person name="Dalla E."/>
            <person name="Dalrymple B.P."/>
            <person name="de Bono B."/>
            <person name="Della Gatta G."/>
            <person name="di Bernardo D."/>
            <person name="Down T."/>
            <person name="Engstrom P."/>
            <person name="Fagiolini M."/>
            <person name="Faulkner G."/>
            <person name="Fletcher C.F."/>
            <person name="Fukushima T."/>
            <person name="Furuno M."/>
            <person name="Futaki S."/>
            <person name="Gariboldi M."/>
            <person name="Georgii-Hemming P."/>
            <person name="Gingeras T.R."/>
            <person name="Gojobori T."/>
            <person name="Green R.E."/>
            <person name="Gustincich S."/>
            <person name="Harbers M."/>
            <person name="Hayashi Y."/>
            <person name="Hensch T.K."/>
            <person name="Hirokawa N."/>
            <person name="Hill D."/>
            <person name="Huminiecki L."/>
            <person name="Iacono M."/>
            <person name="Ikeo K."/>
            <person name="Iwama A."/>
            <person name="Ishikawa T."/>
            <person name="Jakt M."/>
            <person name="Kanapin A."/>
            <person name="Katoh M."/>
            <person name="Kawasawa Y."/>
            <person name="Kelso J."/>
            <person name="Kitamura H."/>
            <person name="Kitano H."/>
            <person name="Kollias G."/>
            <person name="Krishnan S.P."/>
            <person name="Kruger A."/>
            <person name="Kummerfeld S.K."/>
            <person name="Kurochkin I.V."/>
            <person name="Lareau L.F."/>
            <person name="Lazarevic D."/>
            <person name="Lipovich L."/>
            <person name="Liu J."/>
            <person name="Liuni S."/>
            <person name="McWilliam S."/>
            <person name="Madan Babu M."/>
            <person name="Madera M."/>
            <person name="Marchionni L."/>
            <person name="Matsuda H."/>
            <person name="Matsuzawa S."/>
            <person name="Miki H."/>
            <person name="Mignone F."/>
            <person name="Miyake S."/>
            <person name="Morris K."/>
            <person name="Mottagui-Tabar S."/>
            <person name="Mulder N."/>
            <person name="Nakano N."/>
            <person name="Nakauchi H."/>
            <person name="Ng P."/>
            <person name="Nilsson R."/>
            <person name="Nishiguchi S."/>
            <person name="Nishikawa S."/>
            <person name="Nori F."/>
            <person name="Ohara O."/>
            <person name="Okazaki Y."/>
            <person name="Orlando V."/>
            <person name="Pang K.C."/>
            <person name="Pavan W.J."/>
            <person name="Pavesi G."/>
            <person name="Pesole G."/>
            <person name="Petrovsky N."/>
            <person name="Piazza S."/>
            <person name="Reed J."/>
            <person name="Reid J.F."/>
            <person name="Ring B.Z."/>
            <person name="Ringwald M."/>
            <person name="Rost B."/>
            <person name="Ruan Y."/>
            <person name="Salzberg S.L."/>
            <person name="Sandelin A."/>
            <person name="Schneider C."/>
            <person name="Schoenbach C."/>
            <person name="Sekiguchi K."/>
            <person name="Semple C.A."/>
            <person name="Seno S."/>
            <person name="Sessa L."/>
            <person name="Sheng Y."/>
            <person name="Shibata Y."/>
            <person name="Shimada H."/>
            <person name="Shimada K."/>
            <person name="Silva D."/>
            <person name="Sinclair B."/>
            <person name="Sperling S."/>
            <person name="Stupka E."/>
            <person name="Sugiura K."/>
            <person name="Sultana R."/>
            <person name="Takenaka Y."/>
            <person name="Taki K."/>
            <person name="Tammoja K."/>
            <person name="Tan S.L."/>
            <person name="Tang S."/>
            <person name="Taylor M.S."/>
            <person name="Tegner J."/>
            <person name="Teichmann S.A."/>
            <person name="Ueda H.R."/>
            <person name="van Nimwegen E."/>
            <person name="Verardo R."/>
            <person name="Wei C.L."/>
            <person name="Yagi K."/>
            <person name="Yamanishi H."/>
            <person name="Zabarovsky E."/>
            <person name="Zhu S."/>
            <person name="Zimmer A."/>
            <person name="Hide W."/>
            <person name="Bult C."/>
            <person name="Grimmond S.M."/>
            <person name="Teasdale R.D."/>
            <person name="Liu E.T."/>
            <person name="Brusic V."/>
            <person name="Quackenbush J."/>
            <person name="Wahlestedt C."/>
            <person name="Mattick J.S."/>
            <person name="Hume D.A."/>
            <person name="Kai C."/>
            <person name="Sasaki D."/>
            <person name="Tomaru Y."/>
            <person name="Fukuda S."/>
            <person name="Kanamori-Katayama M."/>
            <person name="Suzuki M."/>
            <person name="Aoki J."/>
            <person name="Arakawa T."/>
            <person name="Iida J."/>
            <person name="Imamura K."/>
            <person name="Itoh M."/>
            <person name="Kato T."/>
            <person name="Kawaji H."/>
            <person name="Kawagashira N."/>
            <person name="Kawashima T."/>
            <person name="Kojima M."/>
            <person name="Kondo S."/>
            <person name="Konno H."/>
            <person name="Nakano K."/>
            <person name="Ninomiya N."/>
            <person name="Nishio T."/>
            <person name="Okada M."/>
            <person name="Plessy C."/>
            <person name="Shibata K."/>
            <person name="Shiraki T."/>
            <person name="Suzuki S."/>
            <person name="Tagami M."/>
            <person name="Waki K."/>
            <person name="Watahiki A."/>
            <person name="Okamura-Oho Y."/>
            <person name="Suzuki H."/>
            <person name="Kawai J."/>
            <person name="Hayashizaki Y."/>
        </authorList>
    </citation>
    <scope>NUCLEOTIDE SEQUENCE [LARGE SCALE MRNA]</scope>
    <source>
        <strain>C57BL/6J</strain>
        <tissue>Bone marrow</tissue>
    </source>
</reference>
<reference key="2">
    <citation type="journal article" date="2009" name="PLoS Biol.">
        <title>Lineage-specific biology revealed by a finished genome assembly of the mouse.</title>
        <authorList>
            <person name="Church D.M."/>
            <person name="Goodstadt L."/>
            <person name="Hillier L.W."/>
            <person name="Zody M.C."/>
            <person name="Goldstein S."/>
            <person name="She X."/>
            <person name="Bult C.J."/>
            <person name="Agarwala R."/>
            <person name="Cherry J.L."/>
            <person name="DiCuccio M."/>
            <person name="Hlavina W."/>
            <person name="Kapustin Y."/>
            <person name="Meric P."/>
            <person name="Maglott D."/>
            <person name="Birtle Z."/>
            <person name="Marques A.C."/>
            <person name="Graves T."/>
            <person name="Zhou S."/>
            <person name="Teague B."/>
            <person name="Potamousis K."/>
            <person name="Churas C."/>
            <person name="Place M."/>
            <person name="Herschleb J."/>
            <person name="Runnheim R."/>
            <person name="Forrest D."/>
            <person name="Amos-Landgraf J."/>
            <person name="Schwartz D.C."/>
            <person name="Cheng Z."/>
            <person name="Lindblad-Toh K."/>
            <person name="Eichler E.E."/>
            <person name="Ponting C.P."/>
        </authorList>
    </citation>
    <scope>NUCLEOTIDE SEQUENCE [LARGE SCALE GENOMIC DNA]</scope>
    <source>
        <strain>C57BL/6J</strain>
    </source>
</reference>
<reference key="3">
    <citation type="journal article" date="2004" name="Genome Res.">
        <title>The status, quality, and expansion of the NIH full-length cDNA project: the Mammalian Gene Collection (MGC).</title>
        <authorList>
            <consortium name="The MGC Project Team"/>
        </authorList>
    </citation>
    <scope>NUCLEOTIDE SEQUENCE [LARGE SCALE MRNA] OF 106-288</scope>
    <source>
        <strain>Czech II</strain>
        <strain>FVB/N-3</strain>
        <tissue>Mammary tumor</tissue>
    </source>
</reference>
<reference key="4">
    <citation type="journal article" date="2003" name="Nat. Rev. Genet.">
        <title>Human and mouse proteases: a comparative genomic approach.</title>
        <authorList>
            <person name="Puente X.S."/>
            <person name="Sanchez L.M."/>
            <person name="Overall C.M."/>
            <person name="Lopez-Otin C."/>
        </authorList>
    </citation>
    <scope>IDENTIFICATION</scope>
    <source>
        <strain>C57BL/6J</strain>
    </source>
</reference>
<reference key="5">
    <citation type="journal article" date="2010" name="Cell">
        <title>A tissue-specific atlas of mouse protein phosphorylation and expression.</title>
        <authorList>
            <person name="Huttlin E.L."/>
            <person name="Jedrychowski M.P."/>
            <person name="Elias J.E."/>
            <person name="Goswami T."/>
            <person name="Rad R."/>
            <person name="Beausoleil S.A."/>
            <person name="Villen J."/>
            <person name="Haas W."/>
            <person name="Sowa M.E."/>
            <person name="Gygi S.P."/>
        </authorList>
    </citation>
    <scope>PHOSPHORYLATION [LARGE SCALE ANALYSIS] AT SER-282</scope>
    <scope>IDENTIFICATION BY MASS SPECTROMETRY [LARGE SCALE ANALYSIS]</scope>
    <source>
        <tissue>Brain</tissue>
        <tissue>Spleen</tissue>
        <tissue>Testis</tissue>
    </source>
</reference>
<reference key="6">
    <citation type="journal article" date="2016" name="J. Neurosci.">
        <title>Identification of PSD-95 Depalmitoylating Enzymes.</title>
        <authorList>
            <person name="Yokoi N."/>
            <person name="Fukata Y."/>
            <person name="Sekiya A."/>
            <person name="Murakami T."/>
            <person name="Kobayashi K."/>
            <person name="Fukata M."/>
        </authorList>
    </citation>
    <scope>FUNCTION</scope>
    <scope>CATALYTIC ACTIVITY</scope>
    <scope>SUBCELLULAR LOCATION</scope>
    <scope>TISSUE SPECIFICITY</scope>
    <scope>PALMITOYLATION</scope>
    <scope>ACTIVE SITE</scope>
    <scope>MUTAGENESIS OF 1-MET--GLY-20; 10-CYS--CYS-18; SER-170; ASP-235 AND HIS-264</scope>
</reference>
<reference key="7">
    <citation type="journal article" date="2017" name="Neuron">
        <title>Dynamic palmitoylation targets MAP6 to the axon to promote microtubule stabilization during neuronal polarization.</title>
        <authorList>
            <person name="Tortosa E."/>
            <person name="Adolfs Y."/>
            <person name="Fukata M."/>
            <person name="Pasterkamp R.J."/>
            <person name="Kapitein L.C."/>
            <person name="Hoogenraad C.C."/>
        </authorList>
    </citation>
    <scope>FUNCTION</scope>
    <scope>CATALYTIC ACTIVITY</scope>
</reference>
<evidence type="ECO:0000250" key="1">
    <source>
        <dbReference type="UniProtKB" id="Q5VST6"/>
    </source>
</evidence>
<evidence type="ECO:0000269" key="2">
    <source>
    </source>
</evidence>
<evidence type="ECO:0000305" key="3"/>
<evidence type="ECO:0000305" key="4">
    <source>
    </source>
</evidence>
<evidence type="ECO:0000305" key="5">
    <source>
    </source>
</evidence>
<evidence type="ECO:0000312" key="6">
    <source>
        <dbReference type="MGI" id="MGI:1917816"/>
    </source>
</evidence>
<evidence type="ECO:0007744" key="7">
    <source>
    </source>
</evidence>
<keyword id="KW-1003">Cell membrane</keyword>
<keyword id="KW-0966">Cell projection</keyword>
<keyword id="KW-0967">Endosome</keyword>
<keyword id="KW-0378">Hydrolase</keyword>
<keyword id="KW-0449">Lipoprotein</keyword>
<keyword id="KW-0472">Membrane</keyword>
<keyword id="KW-0564">Palmitate</keyword>
<keyword id="KW-0597">Phosphoprotein</keyword>
<keyword id="KW-0628">Postsynaptic cell membrane</keyword>
<keyword id="KW-1185">Reference proteome</keyword>
<keyword id="KW-0770">Synapse</keyword>
<comment type="function">
    <text evidence="1 2 5">Hydrolyzes fatty acids from S-acylated cysteine residues in proteins (PubMed:27307232). Has depalmitoylating activity towards DLG4/PSD95 (PubMed:27307232). Has depalmitoylating activity towards GAP43 (PubMed:27307232). Has depalmitoylating activity towards MAP6 (PubMed:28521134). Has depalmitoylating activity towards NRAS (By similarity).</text>
</comment>
<comment type="catalytic activity">
    <reaction evidence="2 5">
        <text>S-hexadecanoyl-L-cysteinyl-[protein] + H2O = L-cysteinyl-[protein] + hexadecanoate + H(+)</text>
        <dbReference type="Rhea" id="RHEA:19233"/>
        <dbReference type="Rhea" id="RHEA-COMP:10131"/>
        <dbReference type="Rhea" id="RHEA-COMP:11032"/>
        <dbReference type="ChEBI" id="CHEBI:7896"/>
        <dbReference type="ChEBI" id="CHEBI:15377"/>
        <dbReference type="ChEBI" id="CHEBI:15378"/>
        <dbReference type="ChEBI" id="CHEBI:29950"/>
        <dbReference type="ChEBI" id="CHEBI:74151"/>
        <dbReference type="EC" id="3.1.2.22"/>
    </reaction>
</comment>
<comment type="subcellular location">
    <subcellularLocation>
        <location evidence="2">Cell membrane</location>
        <topology evidence="2">Lipid-anchor</topology>
        <orientation evidence="2">Cytoplasmic side</orientation>
    </subcellularLocation>
    <subcellularLocation>
        <location evidence="2">Recycling endosome membrane</location>
        <topology evidence="2">Lipid-anchor</topology>
        <orientation evidence="2">Cytoplasmic side</orientation>
    </subcellularLocation>
    <subcellularLocation>
        <location evidence="2">Cell projection</location>
        <location evidence="2">Dendritic spine</location>
    </subcellularLocation>
    <subcellularLocation>
        <location evidence="2">Postsynaptic density membrane</location>
    </subcellularLocation>
</comment>
<comment type="tissue specificity">
    <text evidence="2">Expressed in brain.</text>
</comment>
<comment type="PTM">
    <text evidence="2">Palmitoylated on cysteine residues located in a cysteine cluster at the N-terminus which promotes membrane localization. Palmitoylation is required for post-synaptic localization and for depalmitoylating activity towards DLG4/PSD95.</text>
</comment>
<comment type="similarity">
    <text evidence="3">Belongs to the AB hydrolase superfamily. ABHD17 family.</text>
</comment>
<name>AB17B_MOUSE</name>
<feature type="chain" id="PRO_0000281112" description="Alpha/beta hydrolase domain-containing protein 17B">
    <location>
        <begin position="1"/>
        <end position="288"/>
    </location>
</feature>
<feature type="active site" description="Charge relay system" evidence="4">
    <location>
        <position position="170"/>
    </location>
</feature>
<feature type="active site" description="Charge relay system" evidence="4">
    <location>
        <position position="235"/>
    </location>
</feature>
<feature type="active site" description="Charge relay system" evidence="4">
    <location>
        <position position="264"/>
    </location>
</feature>
<feature type="modified residue" description="Phosphoserine" evidence="7">
    <location>
        <position position="282"/>
    </location>
</feature>
<feature type="mutagenesis site" description="Loss of palmitoylation activity towards LG4/PSD95 and appears more diffused at the plasma membrane." evidence="2">
    <original>MNNLSFSELCCLFCCPPCPG</original>
    <variation>MGSNKSKPKDASQRRRSLEP</variation>
    <location>
        <begin position="1"/>
        <end position="20"/>
    </location>
</feature>
<feature type="mutagenesis site" description="Loss of palmitoylation and plasma membrane localization. Loss of LG4/PSD95 depalmitoylation." evidence="2">
    <original>CCLFCCPPC</original>
    <variation>SSLFSSPPS</variation>
    <location>
        <begin position="10"/>
        <end position="18"/>
    </location>
</feature>
<feature type="mutagenesis site" description="Loss of catalytic activity." evidence="2">
    <original>S</original>
    <variation>A</variation>
    <location>
        <position position="170"/>
    </location>
</feature>
<feature type="mutagenesis site" description="Loss of catalytic activity. No effect on its localization. Trapping-mutant that stabilizes interaction with LG4/PSD95." evidence="2">
    <original>D</original>
    <variation>A</variation>
    <location>
        <position position="235"/>
    </location>
</feature>
<feature type="mutagenesis site" description="Loss of catalytic activity." evidence="2">
    <original>H</original>
    <variation>A</variation>
    <location>
        <position position="264"/>
    </location>
</feature>
<organism>
    <name type="scientific">Mus musculus</name>
    <name type="common">Mouse</name>
    <dbReference type="NCBI Taxonomy" id="10090"/>
    <lineage>
        <taxon>Eukaryota</taxon>
        <taxon>Metazoa</taxon>
        <taxon>Chordata</taxon>
        <taxon>Craniata</taxon>
        <taxon>Vertebrata</taxon>
        <taxon>Euteleostomi</taxon>
        <taxon>Mammalia</taxon>
        <taxon>Eutheria</taxon>
        <taxon>Euarchontoglires</taxon>
        <taxon>Glires</taxon>
        <taxon>Rodentia</taxon>
        <taxon>Myomorpha</taxon>
        <taxon>Muroidea</taxon>
        <taxon>Muridae</taxon>
        <taxon>Murinae</taxon>
        <taxon>Mus</taxon>
        <taxon>Mus</taxon>
    </lineage>
</organism>
<sequence length="288" mass="32201">MNNLSFSELCCLFCCPPCPGKIASKLAFLPPDPTYTLMCDESGSRWTLHLSERADWQYSSREKDAIECFMTRTSKGNRIACMFVRCSPNAKYTLLFSHGNAVDLGQMSSFYIGLGSRINCNIFSYDYSGYGASSGKPTEKNLYADVEAAWLALRTRYGIRPENVIIYGQSIGTVPSVDLAARYESAAVILHSPLTSGMRVAFPDTKKTYCFDAFPNIDKISKITSPVLIIHGTEDEVIDFSHGLALFERCQRPVEPLWVEGAGHNDVELYGQYLERLKQFVSQELVNL</sequence>
<accession>Q7M759</accession>
<accession>Q58EV9</accession>
<accession>Q8K275</accession>